<sequence length="346" mass="37306">MTTNTVTLQTAHIVSLGDIEEAKASIKPFIRRTPLIKSMYLSQSITKGNVFLKLENMQFTGSFKFRGASNKINHLTDEQKEKGIIAASAGNHAQGVALTAKLLGIDATIVMPETAPQAKQQATKGYGAKVILKGKNFNETRLYMEELAKENGMTIVHPYDDKFVMAGQGTIGLEILDDIWNVNTVIVPVGGGGLIAGIATALKSFNPSIHIIGVQSENVHGMAESFYKRDLTEHRVDSTIADGCDVKVPGEQTYEVVKHLVDEFILVTEEEIEHAMKDLMQRAKIITEGAGALPTAAILSGKINNKWLEDKNVVALVSGGNVDLTRVSGVIEHGLNIADTSKGVVG</sequence>
<keyword id="KW-0021">Allosteric enzyme</keyword>
<keyword id="KW-0456">Lyase</keyword>
<keyword id="KW-0547">Nucleotide-binding</keyword>
<keyword id="KW-0663">Pyridoxal phosphate</keyword>
<feature type="chain" id="PRO_0000287327" description="L-threonine dehydratase catabolic TdcB">
    <location>
        <begin position="1"/>
        <end position="346"/>
    </location>
</feature>
<feature type="binding site" evidence="1">
    <location>
        <begin position="59"/>
        <end position="60"/>
    </location>
    <ligand>
        <name>AMP</name>
        <dbReference type="ChEBI" id="CHEBI:456215"/>
    </ligand>
</feature>
<feature type="binding site" evidence="1">
    <location>
        <position position="94"/>
    </location>
    <ligand>
        <name>AMP</name>
        <dbReference type="ChEBI" id="CHEBI:456215"/>
    </ligand>
</feature>
<feature type="binding site" evidence="1">
    <location>
        <begin position="125"/>
        <end position="126"/>
    </location>
    <ligand>
        <name>AMP</name>
        <dbReference type="ChEBI" id="CHEBI:456215"/>
    </ligand>
</feature>
<feature type="binding site" evidence="1">
    <location>
        <position position="321"/>
    </location>
    <ligand>
        <name>AMP</name>
        <dbReference type="ChEBI" id="CHEBI:456215"/>
    </ligand>
</feature>
<feature type="modified residue" description="N6-(pyridoxal phosphate)lysine" evidence="1">
    <location>
        <position position="64"/>
    </location>
</feature>
<proteinExistence type="inferred from homology"/>
<evidence type="ECO:0000250" key="1"/>
<evidence type="ECO:0000305" key="2"/>
<protein>
    <recommendedName>
        <fullName>L-threonine dehydratase catabolic TdcB</fullName>
        <ecNumber>4.3.1.19</ecNumber>
    </recommendedName>
    <alternativeName>
        <fullName>Threonine deaminase</fullName>
    </alternativeName>
</protein>
<reference key="1">
    <citation type="journal article" date="2005" name="J. Bacteriol.">
        <title>Insights on evolution of virulence and resistance from the complete genome analysis of an early methicillin-resistant Staphylococcus aureus strain and a biofilm-producing methicillin-resistant Staphylococcus epidermidis strain.</title>
        <authorList>
            <person name="Gill S.R."/>
            <person name="Fouts D.E."/>
            <person name="Archer G.L."/>
            <person name="Mongodin E.F."/>
            <person name="DeBoy R.T."/>
            <person name="Ravel J."/>
            <person name="Paulsen I.T."/>
            <person name="Kolonay J.F."/>
            <person name="Brinkac L.M."/>
            <person name="Beanan M.J."/>
            <person name="Dodson R.J."/>
            <person name="Daugherty S.C."/>
            <person name="Madupu R."/>
            <person name="Angiuoli S.V."/>
            <person name="Durkin A.S."/>
            <person name="Haft D.H."/>
            <person name="Vamathevan J.J."/>
            <person name="Khouri H."/>
            <person name="Utterback T.R."/>
            <person name="Lee C."/>
            <person name="Dimitrov G."/>
            <person name="Jiang L."/>
            <person name="Qin H."/>
            <person name="Weidman J."/>
            <person name="Tran K."/>
            <person name="Kang K.H."/>
            <person name="Hance I.R."/>
            <person name="Nelson K.E."/>
            <person name="Fraser C.M."/>
        </authorList>
    </citation>
    <scope>NUCLEOTIDE SEQUENCE [LARGE SCALE GENOMIC DNA]</scope>
    <source>
        <strain>COL</strain>
    </source>
</reference>
<organism>
    <name type="scientific">Staphylococcus aureus (strain COL)</name>
    <dbReference type="NCBI Taxonomy" id="93062"/>
    <lineage>
        <taxon>Bacteria</taxon>
        <taxon>Bacillati</taxon>
        <taxon>Bacillota</taxon>
        <taxon>Bacilli</taxon>
        <taxon>Bacillales</taxon>
        <taxon>Staphylococcaceae</taxon>
        <taxon>Staphylococcus</taxon>
    </lineage>
</organism>
<dbReference type="EC" id="4.3.1.19"/>
<dbReference type="EMBL" id="CP000046">
    <property type="protein sequence ID" value="AAW36673.1"/>
    <property type="molecule type" value="Genomic_DNA"/>
</dbReference>
<dbReference type="RefSeq" id="WP_000210828.1">
    <property type="nucleotide sequence ID" value="NZ_JBGOFO010000003.1"/>
</dbReference>
<dbReference type="SMR" id="Q5HFY5"/>
<dbReference type="KEGG" id="sac:SACOL1477"/>
<dbReference type="HOGENOM" id="CLU_021152_4_2_9"/>
<dbReference type="UniPathway" id="UPA00052">
    <property type="reaction ID" value="UER00507"/>
</dbReference>
<dbReference type="Proteomes" id="UP000000530">
    <property type="component" value="Chromosome"/>
</dbReference>
<dbReference type="GO" id="GO:0003941">
    <property type="term" value="F:L-serine ammonia-lyase activity"/>
    <property type="evidence" value="ECO:0007669"/>
    <property type="project" value="TreeGrafter"/>
</dbReference>
<dbReference type="GO" id="GO:0000166">
    <property type="term" value="F:nucleotide binding"/>
    <property type="evidence" value="ECO:0007669"/>
    <property type="project" value="UniProtKB-KW"/>
</dbReference>
<dbReference type="GO" id="GO:0030170">
    <property type="term" value="F:pyridoxal phosphate binding"/>
    <property type="evidence" value="ECO:0007669"/>
    <property type="project" value="InterPro"/>
</dbReference>
<dbReference type="GO" id="GO:0004794">
    <property type="term" value="F:threonine deaminase activity"/>
    <property type="evidence" value="ECO:0007669"/>
    <property type="project" value="UniProtKB-EC"/>
</dbReference>
<dbReference type="GO" id="GO:0009097">
    <property type="term" value="P:isoleucine biosynthetic process"/>
    <property type="evidence" value="ECO:0007669"/>
    <property type="project" value="TreeGrafter"/>
</dbReference>
<dbReference type="GO" id="GO:0006565">
    <property type="term" value="P:L-serine catabolic process"/>
    <property type="evidence" value="ECO:0007669"/>
    <property type="project" value="TreeGrafter"/>
</dbReference>
<dbReference type="GO" id="GO:0070689">
    <property type="term" value="P:L-threonine catabolic process to propionate"/>
    <property type="evidence" value="ECO:0007669"/>
    <property type="project" value="UniProtKB-UniPathway"/>
</dbReference>
<dbReference type="CDD" id="cd01562">
    <property type="entry name" value="Thr-dehyd"/>
    <property type="match status" value="1"/>
</dbReference>
<dbReference type="FunFam" id="3.40.50.1100:FF:000007">
    <property type="entry name" value="L-threonine dehydratase catabolic TdcB"/>
    <property type="match status" value="1"/>
</dbReference>
<dbReference type="Gene3D" id="3.40.50.1100">
    <property type="match status" value="2"/>
</dbReference>
<dbReference type="InterPro" id="IPR050147">
    <property type="entry name" value="Ser/Thr_Dehydratase"/>
</dbReference>
<dbReference type="InterPro" id="IPR000634">
    <property type="entry name" value="Ser/Thr_deHydtase_PyrdxlP-BS"/>
</dbReference>
<dbReference type="InterPro" id="IPR005789">
    <property type="entry name" value="Thr_deHydtase_catblc"/>
</dbReference>
<dbReference type="InterPro" id="IPR001926">
    <property type="entry name" value="TrpB-like_PALP"/>
</dbReference>
<dbReference type="InterPro" id="IPR036052">
    <property type="entry name" value="TrpB-like_PALP_sf"/>
</dbReference>
<dbReference type="NCBIfam" id="TIGR01127">
    <property type="entry name" value="ilvA_1Cterm"/>
    <property type="match status" value="1"/>
</dbReference>
<dbReference type="NCBIfam" id="NF006389">
    <property type="entry name" value="PRK08638.1"/>
    <property type="match status" value="1"/>
</dbReference>
<dbReference type="PANTHER" id="PTHR48078:SF6">
    <property type="entry name" value="L-THREONINE DEHYDRATASE CATABOLIC TDCB"/>
    <property type="match status" value="1"/>
</dbReference>
<dbReference type="PANTHER" id="PTHR48078">
    <property type="entry name" value="THREONINE DEHYDRATASE, MITOCHONDRIAL-RELATED"/>
    <property type="match status" value="1"/>
</dbReference>
<dbReference type="Pfam" id="PF00291">
    <property type="entry name" value="PALP"/>
    <property type="match status" value="1"/>
</dbReference>
<dbReference type="SUPFAM" id="SSF53686">
    <property type="entry name" value="Tryptophan synthase beta subunit-like PLP-dependent enzymes"/>
    <property type="match status" value="1"/>
</dbReference>
<dbReference type="PROSITE" id="PS00165">
    <property type="entry name" value="DEHYDRATASE_SER_THR"/>
    <property type="match status" value="1"/>
</dbReference>
<name>TDCB_STAAC</name>
<accession>Q5HFY5</accession>
<comment type="function">
    <text evidence="1">Catalyzes the anaerobic formation of alpha-ketobutyrate and ammonia from threonine in a two-step reaction. The first step involved a dehydration of threonine and a production of enamine intermediates (aminocrotonate), which tautomerizes to its imine form (iminobutyrate). Both intermediates are unstable and short-lived. The second step is the nonenzymatic hydrolysis of the enamine/imine intermediates to form 2-ketobutyrate and free ammonia. In the low water environment of the cell, the second step is accelerated by RidA (By similarity).</text>
</comment>
<comment type="catalytic activity">
    <reaction>
        <text>L-threonine = 2-oxobutanoate + NH4(+)</text>
        <dbReference type="Rhea" id="RHEA:22108"/>
        <dbReference type="ChEBI" id="CHEBI:16763"/>
        <dbReference type="ChEBI" id="CHEBI:28938"/>
        <dbReference type="ChEBI" id="CHEBI:57926"/>
        <dbReference type="EC" id="4.3.1.19"/>
    </reaction>
</comment>
<comment type="cofactor">
    <cofactor evidence="1">
        <name>pyridoxal 5'-phosphate</name>
        <dbReference type="ChEBI" id="CHEBI:597326"/>
    </cofactor>
</comment>
<comment type="activity regulation">
    <text evidence="1">Each protein molecule can bind up to four molecules of AMP, which act as an allosteric activator to the enzyme.</text>
</comment>
<comment type="pathway">
    <text>Amino-acid degradation; L-threonine degradation via propanoate pathway; propanoate from L-threonine: step 1/4.</text>
</comment>
<comment type="subunit">
    <text evidence="1">In the native structure, TdcB is in a dimeric form, whereas in the TdcB-AMP complex, it exists in a tetrameric form (dimer of dimers).</text>
</comment>
<comment type="similarity">
    <text evidence="2">Belongs to the serine/threonine dehydratase family.</text>
</comment>
<gene>
    <name type="primary">tdcB</name>
    <name type="ordered locus">SACOL1477</name>
</gene>